<reference key="1">
    <citation type="journal article" date="2000" name="Proc. Natl. Acad. Sci. U.S.A.">
        <title>Genome sequence of Halobacterium species NRC-1.</title>
        <authorList>
            <person name="Ng W.V."/>
            <person name="Kennedy S.P."/>
            <person name="Mahairas G.G."/>
            <person name="Berquist B."/>
            <person name="Pan M."/>
            <person name="Shukla H.D."/>
            <person name="Lasky S.R."/>
            <person name="Baliga N.S."/>
            <person name="Thorsson V."/>
            <person name="Sbrogna J."/>
            <person name="Swartzell S."/>
            <person name="Weir D."/>
            <person name="Hall J."/>
            <person name="Dahl T.A."/>
            <person name="Welti R."/>
            <person name="Goo Y.A."/>
            <person name="Leithauser B."/>
            <person name="Keller K."/>
            <person name="Cruz R."/>
            <person name="Danson M.J."/>
            <person name="Hough D.W."/>
            <person name="Maddocks D.G."/>
            <person name="Jablonski P.E."/>
            <person name="Krebs M.P."/>
            <person name="Angevine C.M."/>
            <person name="Dale H."/>
            <person name="Isenbarger T.A."/>
            <person name="Peck R.F."/>
            <person name="Pohlschroder M."/>
            <person name="Spudich J.L."/>
            <person name="Jung K.-H."/>
            <person name="Alam M."/>
            <person name="Freitas T."/>
            <person name="Hou S."/>
            <person name="Daniels C.J."/>
            <person name="Dennis P.P."/>
            <person name="Omer A.D."/>
            <person name="Ebhardt H."/>
            <person name="Lowe T.M."/>
            <person name="Liang P."/>
            <person name="Riley M."/>
            <person name="Hood L."/>
            <person name="DasSarma S."/>
        </authorList>
    </citation>
    <scope>NUCLEOTIDE SEQUENCE [LARGE SCALE GENOMIC DNA]</scope>
    <source>
        <strain>ATCC 700922 / JCM 11081 / NRC-1</strain>
    </source>
</reference>
<name>TBPF_HALSA</name>
<geneLocation type="plasmid">
    <name>pNRC200</name>
</geneLocation>
<comment type="function">
    <text evidence="1">General factor that plays a role in the activation of archaeal genes transcribed by RNA polymerase. Binds specifically to the TATA box promoter element which lies close to the position of transcription initiation (By similarity).</text>
</comment>
<comment type="similarity">
    <text evidence="2">Belongs to the TBP family.</text>
</comment>
<accession>Q9HHE9</accession>
<organism>
    <name type="scientific">Halobacterium salinarum (strain ATCC 700922 / JCM 11081 / NRC-1)</name>
    <name type="common">Halobacterium halobium</name>
    <dbReference type="NCBI Taxonomy" id="64091"/>
    <lineage>
        <taxon>Archaea</taxon>
        <taxon>Methanobacteriati</taxon>
        <taxon>Methanobacteriota</taxon>
        <taxon>Stenosarchaea group</taxon>
        <taxon>Halobacteria</taxon>
        <taxon>Halobacteriales</taxon>
        <taxon>Halobacteriaceae</taxon>
        <taxon>Halobacterium</taxon>
        <taxon>Halobacterium salinarum NRC-34001</taxon>
    </lineage>
</organism>
<dbReference type="EMBL" id="AE004438">
    <property type="protein sequence ID" value="AAG21034.1"/>
    <property type="molecule type" value="Genomic_DNA"/>
</dbReference>
<dbReference type="RefSeq" id="WP_010904241.1">
    <property type="nucleotide sequence ID" value="NC_002608.1"/>
</dbReference>
<dbReference type="SMR" id="Q9HHE9"/>
<dbReference type="FunCoup" id="Q9HHE9">
    <property type="interactions" value="128"/>
</dbReference>
<dbReference type="GeneID" id="1449409"/>
<dbReference type="KEGG" id="hal:VNG_6438G"/>
<dbReference type="PATRIC" id="fig|64091.14.peg.2363"/>
<dbReference type="HOGENOM" id="CLU_060161_4_3_2"/>
<dbReference type="InParanoid" id="Q9HHE9"/>
<dbReference type="OrthoDB" id="350539at2157"/>
<dbReference type="Proteomes" id="UP000000554">
    <property type="component" value="Plasmid pNRC200"/>
</dbReference>
<dbReference type="GO" id="GO:0003677">
    <property type="term" value="F:DNA binding"/>
    <property type="evidence" value="ECO:0007669"/>
    <property type="project" value="UniProtKB-KW"/>
</dbReference>
<dbReference type="GO" id="GO:0003700">
    <property type="term" value="F:DNA-binding transcription factor activity"/>
    <property type="evidence" value="ECO:0007669"/>
    <property type="project" value="UniProtKB-UniRule"/>
</dbReference>
<dbReference type="GO" id="GO:0140223">
    <property type="term" value="F:general transcription initiation factor activity"/>
    <property type="evidence" value="ECO:0000318"/>
    <property type="project" value="GO_Central"/>
</dbReference>
<dbReference type="GO" id="GO:0006352">
    <property type="term" value="P:DNA-templated transcription initiation"/>
    <property type="evidence" value="ECO:0000318"/>
    <property type="project" value="GO_Central"/>
</dbReference>
<dbReference type="CDD" id="cd04518">
    <property type="entry name" value="TBP_archaea"/>
    <property type="match status" value="1"/>
</dbReference>
<dbReference type="FunFam" id="3.30.310.10:FF:000007">
    <property type="entry name" value="TATA-box-binding protein"/>
    <property type="match status" value="1"/>
</dbReference>
<dbReference type="FunFam" id="3.30.310.10:FF:000010">
    <property type="entry name" value="TATA-box-binding protein"/>
    <property type="match status" value="1"/>
</dbReference>
<dbReference type="Gene3D" id="3.30.310.10">
    <property type="entry name" value="TATA-Binding Protein"/>
    <property type="match status" value="2"/>
</dbReference>
<dbReference type="HAMAP" id="MF_00408">
    <property type="entry name" value="TATA_bind_prot_arch"/>
    <property type="match status" value="1"/>
</dbReference>
<dbReference type="InterPro" id="IPR000814">
    <property type="entry name" value="TBP"/>
</dbReference>
<dbReference type="InterPro" id="IPR033711">
    <property type="entry name" value="TBP_archaea"/>
</dbReference>
<dbReference type="InterPro" id="IPR030491">
    <property type="entry name" value="TBP_CS"/>
</dbReference>
<dbReference type="InterPro" id="IPR012295">
    <property type="entry name" value="TBP_dom_sf"/>
</dbReference>
<dbReference type="NCBIfam" id="NF001593">
    <property type="entry name" value="PRK00394.1-2"/>
    <property type="match status" value="1"/>
</dbReference>
<dbReference type="NCBIfam" id="NF001595">
    <property type="entry name" value="PRK00394.1-5"/>
    <property type="match status" value="1"/>
</dbReference>
<dbReference type="NCBIfam" id="NF001597">
    <property type="entry name" value="PRK00394.2-2"/>
    <property type="match status" value="1"/>
</dbReference>
<dbReference type="PANTHER" id="PTHR10126">
    <property type="entry name" value="TATA-BOX BINDING PROTEIN"/>
    <property type="match status" value="1"/>
</dbReference>
<dbReference type="Pfam" id="PF00352">
    <property type="entry name" value="TBP"/>
    <property type="match status" value="2"/>
</dbReference>
<dbReference type="PRINTS" id="PR00686">
    <property type="entry name" value="TIFACTORIID"/>
</dbReference>
<dbReference type="SUPFAM" id="SSF55945">
    <property type="entry name" value="TATA-box binding protein-like"/>
    <property type="match status" value="2"/>
</dbReference>
<dbReference type="PROSITE" id="PS00351">
    <property type="entry name" value="TFIID"/>
    <property type="match status" value="1"/>
</dbReference>
<feature type="chain" id="PRO_0000154004" description="TATA-box-binding protein F">
    <location>
        <begin position="1"/>
        <end position="186"/>
    </location>
</feature>
<feature type="repeat" description="1">
    <location>
        <begin position="10"/>
        <end position="86"/>
    </location>
</feature>
<feature type="repeat" description="2">
    <location>
        <begin position="101"/>
        <end position="179"/>
    </location>
</feature>
<evidence type="ECO:0000250" key="1"/>
<evidence type="ECO:0000305" key="2"/>
<gene>
    <name type="primary">tbpF</name>
    <name type="ordered locus">VNG_6438G</name>
</gene>
<keyword id="KW-0238">DNA-binding</keyword>
<keyword id="KW-0614">Plasmid</keyword>
<keyword id="KW-1185">Reference proteome</keyword>
<keyword id="KW-0677">Repeat</keyword>
<keyword id="KW-0804">Transcription</keyword>
<keyword id="KW-0805">Transcription regulation</keyword>
<protein>
    <recommendedName>
        <fullName>TATA-box-binding protein F</fullName>
    </recommendedName>
    <alternativeName>
        <fullName>Box A-binding protein F</fullName>
        <shortName>BAP F</shortName>
    </alternativeName>
    <alternativeName>
        <fullName>TATA sequence-binding protein F</fullName>
        <shortName>TBP F</shortName>
    </alternativeName>
    <alternativeName>
        <fullName>TATA-box factor F</fullName>
    </alternativeName>
</protein>
<proteinExistence type="inferred from homology"/>
<sequence length="186" mass="19896">MSSLADTIHIENVVASSDLGQELALDQLATDLDGAEYNPEDFPGVVYRLQEPKSATLIFRSGKVVCTGAKSVDAVHDALEIVFDDLRELGIDVDSTPPVKVQNIVSSASLEQSLNLNAIAIGLGLEQIEYEPEQFPGLVYRLDDPDVVVLLFGSGKLVITGAAESADAQHALAHVNDRLTELGLLE</sequence>